<organism>
    <name type="scientific">Escherichia coli (strain SMS-3-5 / SECEC)</name>
    <dbReference type="NCBI Taxonomy" id="439855"/>
    <lineage>
        <taxon>Bacteria</taxon>
        <taxon>Pseudomonadati</taxon>
        <taxon>Pseudomonadota</taxon>
        <taxon>Gammaproteobacteria</taxon>
        <taxon>Enterobacterales</taxon>
        <taxon>Enterobacteriaceae</taxon>
        <taxon>Escherichia</taxon>
    </lineage>
</organism>
<evidence type="ECO:0000255" key="1">
    <source>
        <dbReference type="HAMAP-Rule" id="MF_01868"/>
    </source>
</evidence>
<dbReference type="EC" id="3.1.3.-" evidence="1"/>
<dbReference type="EMBL" id="CP000970">
    <property type="protein sequence ID" value="ACB19865.1"/>
    <property type="molecule type" value="Genomic_DNA"/>
</dbReference>
<dbReference type="RefSeq" id="WP_001306469.1">
    <property type="nucleotide sequence ID" value="NC_010498.1"/>
</dbReference>
<dbReference type="SMR" id="B1LLK6"/>
<dbReference type="KEGG" id="ecm:EcSMS35_2406"/>
<dbReference type="HOGENOM" id="CLU_106705_1_0_6"/>
<dbReference type="UniPathway" id="UPA00451"/>
<dbReference type="Proteomes" id="UP000007011">
    <property type="component" value="Chromosome"/>
</dbReference>
<dbReference type="GO" id="GO:0042597">
    <property type="term" value="C:periplasmic space"/>
    <property type="evidence" value="ECO:0007669"/>
    <property type="project" value="UniProtKB-SubCell"/>
</dbReference>
<dbReference type="GO" id="GO:0016791">
    <property type="term" value="F:phosphatase activity"/>
    <property type="evidence" value="ECO:0007669"/>
    <property type="project" value="UniProtKB-UniRule"/>
</dbReference>
<dbReference type="GO" id="GO:0008653">
    <property type="term" value="P:lipopolysaccharide metabolic process"/>
    <property type="evidence" value="ECO:0007669"/>
    <property type="project" value="UniProtKB-UniRule"/>
</dbReference>
<dbReference type="CDD" id="cd07040">
    <property type="entry name" value="HP"/>
    <property type="match status" value="1"/>
</dbReference>
<dbReference type="Gene3D" id="3.40.50.1240">
    <property type="entry name" value="Phosphoglycerate mutase-like"/>
    <property type="match status" value="1"/>
</dbReference>
<dbReference type="HAMAP" id="MF_01868">
    <property type="entry name" value="Ais"/>
    <property type="match status" value="1"/>
</dbReference>
<dbReference type="InterPro" id="IPR013078">
    <property type="entry name" value="His_Pase_superF_clade-1"/>
</dbReference>
<dbReference type="InterPro" id="IPR029033">
    <property type="entry name" value="His_PPase_superfam"/>
</dbReference>
<dbReference type="InterPro" id="IPR011310">
    <property type="entry name" value="LipoPS_heptP_Pase"/>
</dbReference>
<dbReference type="NCBIfam" id="NF011945">
    <property type="entry name" value="PRK15416.1"/>
    <property type="match status" value="1"/>
</dbReference>
<dbReference type="Pfam" id="PF00300">
    <property type="entry name" value="His_Phos_1"/>
    <property type="match status" value="1"/>
</dbReference>
<dbReference type="PIRSF" id="PIRSF011416">
    <property type="entry name" value="Ais-TraG-AfrS"/>
    <property type="match status" value="1"/>
</dbReference>
<dbReference type="SUPFAM" id="SSF53254">
    <property type="entry name" value="Phosphoglycerate mutase-like"/>
    <property type="match status" value="1"/>
</dbReference>
<keyword id="KW-0378">Hydrolase</keyword>
<keyword id="KW-0574">Periplasm</keyword>
<keyword id="KW-0732">Signal</keyword>
<comment type="function">
    <text evidence="1">Catalyzes the dephosphorylation of heptose(II) of the outer membrane lipopolysaccharide core.</text>
</comment>
<comment type="pathway">
    <text evidence="1">Bacterial outer membrane biogenesis; lipopolysaccharide metabolism.</text>
</comment>
<comment type="subcellular location">
    <subcellularLocation>
        <location evidence="1">Periplasm</location>
    </subcellularLocation>
</comment>
<comment type="similarity">
    <text evidence="1">Belongs to the phosphoglycerate mutase family. Ais subfamily.</text>
</comment>
<gene>
    <name evidence="1" type="primary">ais</name>
    <name type="ordered locus">EcSMS35_2406</name>
</gene>
<accession>B1LLK6</accession>
<protein>
    <recommendedName>
        <fullName evidence="1">Lipopolysaccharide core heptose(II)-phosphate phosphatase</fullName>
        <ecNumber evidence="1">3.1.3.-</ecNumber>
    </recommendedName>
</protein>
<sequence length="200" mass="22291">MLAFCRSSLKSKKYFIILLALAAIAGLGTHAAWSSNGLPRIDNKTLARLAQQHPVVVLFRHAERCDRSTNQCLSDKTGITVKGTQDARELGNAFSADIPDFDLYSSNTVRTIQSATWFSAGKKLTVDKRLLQCGNEIYSAIKDLQSKAPDKNIVIFTHNHCLTYIAKDKRDATFKPDYLDGLVMHVEKGKVYLDGEFVNH</sequence>
<name>AIS_ECOSM</name>
<proteinExistence type="inferred from homology"/>
<reference key="1">
    <citation type="journal article" date="2008" name="J. Bacteriol.">
        <title>Insights into the environmental resistance gene pool from the genome sequence of the multidrug-resistant environmental isolate Escherichia coli SMS-3-5.</title>
        <authorList>
            <person name="Fricke W.F."/>
            <person name="Wright M.S."/>
            <person name="Lindell A.H."/>
            <person name="Harkins D.M."/>
            <person name="Baker-Austin C."/>
            <person name="Ravel J."/>
            <person name="Stepanauskas R."/>
        </authorList>
    </citation>
    <scope>NUCLEOTIDE SEQUENCE [LARGE SCALE GENOMIC DNA]</scope>
    <source>
        <strain>SMS-3-5 / SECEC</strain>
    </source>
</reference>
<feature type="signal peptide" evidence="1">
    <location>
        <begin position="1"/>
        <end position="25"/>
    </location>
</feature>
<feature type="chain" id="PRO_0000380558" description="Lipopolysaccharide core heptose(II)-phosphate phosphatase">
    <location>
        <begin position="26"/>
        <end position="200"/>
    </location>
</feature>